<accession>Q5EAJ7</accession>
<reference evidence="11" key="1">
    <citation type="journal article" date="2003" name="Genome Res.">
        <title>Generation, annotation, evolutionary analysis, and database integration of 20,000 unique sea urchin EST clusters.</title>
        <authorList>
            <person name="Poustka A.J."/>
            <person name="Groth D."/>
            <person name="Hennig S."/>
            <person name="Thamm S."/>
            <person name="Cameron A."/>
            <person name="Beck A."/>
            <person name="Reinhardt R."/>
            <person name="Herwig R."/>
            <person name="Panopoulou G."/>
            <person name="Lehrach H."/>
        </authorList>
    </citation>
    <scope>NUCLEOTIDE SEQUENCE [LARGE SCALE MRNA] OF 1-533 AND 616-857</scope>
    <source>
        <tissue evidence="7">Gastrula</tissue>
        <tissue evidence="7">Larva</tissue>
    </source>
</reference>
<reference evidence="11" key="2">
    <citation type="journal article" date="2001" name="Development">
        <title>A large-scale analysis of mRNAs expressed by primary mesenchyme cells of the sea urchin embryo.</title>
        <authorList>
            <person name="Zhu X."/>
            <person name="Mahairas G."/>
            <person name="Illies M."/>
            <person name="Cameron R.A."/>
            <person name="Davidson E.H."/>
            <person name="Ettensohn C.A."/>
        </authorList>
    </citation>
    <scope>NUCLEOTIDE SEQUENCE [LARGE SCALE MRNA] OF 499-769</scope>
    <source>
        <tissue evidence="6">Embryo</tissue>
    </source>
</reference>
<reference evidence="11" key="3">
    <citation type="journal article" date="1997" name="Dev. Biol.">
        <title>Characterization of the sea urchin major vault protein: a possible role for vault ribonucleoprotein particles in nucleocytoplasmic transport.</title>
        <authorList>
            <person name="Hamill D.R."/>
            <person name="Suprenant K.A."/>
        </authorList>
    </citation>
    <scope>SUBCELLULAR LOCATION</scope>
    <scope>TISSUE SPECIFICITY</scope>
    <scope>DEVELOPMENTAL STAGE</scope>
</reference>
<reference evidence="11 12" key="4">
    <citation type="journal article" date="2005" name="BMC Dev. Biol.">
        <title>Sea urchin vault structure, composition, and differential localization during development.</title>
        <authorList>
            <person name="Stewart P.L."/>
            <person name="Makabi M."/>
            <person name="Lang J."/>
            <person name="Dickey-Sims C."/>
            <person name="Robertson A.J."/>
            <person name="Coffman J.A."/>
            <person name="Suprenant K.A."/>
        </authorList>
    </citation>
    <scope>STRUCTURE BY ELECTRON MICROSCOPY (33 ANGSTROMS)</scope>
    <scope>IDENTIFICATION</scope>
    <scope>SUBCELLULAR LOCATION</scope>
    <scope>DEVELOPMENTAL STAGE</scope>
</reference>
<evidence type="ECO:0000250" key="1">
    <source>
        <dbReference type="UniProtKB" id="Q14764"/>
    </source>
</evidence>
<evidence type="ECO:0000255" key="2"/>
<evidence type="ECO:0000255" key="3">
    <source>
        <dbReference type="PROSITE-ProRule" id="PRU00116"/>
    </source>
</evidence>
<evidence type="ECO:0000255" key="4">
    <source>
        <dbReference type="PROSITE-ProRule" id="PRU00571"/>
    </source>
</evidence>
<evidence type="ECO:0000256" key="5">
    <source>
        <dbReference type="SAM" id="MobiDB-lite"/>
    </source>
</evidence>
<evidence type="ECO:0000269" key="6">
    <source>
    </source>
</evidence>
<evidence type="ECO:0000269" key="7">
    <source>
    </source>
</evidence>
<evidence type="ECO:0000269" key="8">
    <source>
    </source>
</evidence>
<evidence type="ECO:0000269" key="9">
    <source>
    </source>
</evidence>
<evidence type="ECO:0000303" key="10">
    <source>
    </source>
</evidence>
<evidence type="ECO:0000305" key="11"/>
<evidence type="ECO:0000312" key="12">
    <source>
        <dbReference type="EMBL" id="DAA05661.1"/>
    </source>
</evidence>
<dbReference type="EMBL" id="CD292179">
    <property type="status" value="NOT_ANNOTATED_CDS"/>
    <property type="molecule type" value="mRNA"/>
</dbReference>
<dbReference type="EMBL" id="CD292477">
    <property type="status" value="NOT_ANNOTATED_CDS"/>
    <property type="molecule type" value="mRNA"/>
</dbReference>
<dbReference type="EMBL" id="CD295616">
    <property type="status" value="NOT_ANNOTATED_CDS"/>
    <property type="molecule type" value="mRNA"/>
</dbReference>
<dbReference type="EMBL" id="CD295832">
    <property type="status" value="NOT_ANNOTATED_CDS"/>
    <property type="molecule type" value="mRNA"/>
</dbReference>
<dbReference type="EMBL" id="CD304000">
    <property type="status" value="NOT_ANNOTATED_CDS"/>
    <property type="molecule type" value="mRNA"/>
</dbReference>
<dbReference type="EMBL" id="CD305382">
    <property type="status" value="NOT_ANNOTATED_CDS"/>
    <property type="molecule type" value="mRNA"/>
</dbReference>
<dbReference type="EMBL" id="CD305511">
    <property type="status" value="NOT_ANNOTATED_CDS"/>
    <property type="molecule type" value="mRNA"/>
</dbReference>
<dbReference type="EMBL" id="CD305646">
    <property type="status" value="NOT_ANNOTATED_CDS"/>
    <property type="molecule type" value="mRNA"/>
</dbReference>
<dbReference type="EMBL" id="CD307400">
    <property type="status" value="NOT_ANNOTATED_CDS"/>
    <property type="molecule type" value="mRNA"/>
</dbReference>
<dbReference type="EMBL" id="CD310423">
    <property type="status" value="NOT_ANNOTATED_CDS"/>
    <property type="molecule type" value="mRNA"/>
</dbReference>
<dbReference type="EMBL" id="CD333690">
    <property type="status" value="NOT_ANNOTATED_CDS"/>
    <property type="molecule type" value="mRNA"/>
</dbReference>
<dbReference type="EMBL" id="BG784394">
    <property type="status" value="NOT_ANNOTATED_CDS"/>
    <property type="molecule type" value="mRNA"/>
</dbReference>
<dbReference type="EMBL" id="BG784484">
    <property type="status" value="NOT_ANNOTATED_CDS"/>
    <property type="molecule type" value="mRNA"/>
</dbReference>
<dbReference type="EMBL" id="BK005641">
    <property type="protein sequence ID" value="DAA05661.1"/>
    <property type="molecule type" value="mRNA"/>
</dbReference>
<dbReference type="RefSeq" id="NP_001116989.1">
    <property type="nucleotide sequence ID" value="NM_001123517.1"/>
</dbReference>
<dbReference type="SMR" id="Q5EAJ7"/>
<dbReference type="FunCoup" id="Q5EAJ7">
    <property type="interactions" value="159"/>
</dbReference>
<dbReference type="STRING" id="7668.Q5EAJ7"/>
<dbReference type="EnsemblMetazoa" id="NM_001123517">
    <property type="protein sequence ID" value="NP_001116989"/>
    <property type="gene ID" value="GeneID_575735"/>
</dbReference>
<dbReference type="GeneID" id="575735"/>
<dbReference type="KEGG" id="spu:575735"/>
<dbReference type="CTD" id="9961"/>
<dbReference type="eggNOG" id="ENOG502QPP0">
    <property type="taxonomic scope" value="Eukaryota"/>
</dbReference>
<dbReference type="HOGENOM" id="CLU_016171_0_0_1"/>
<dbReference type="InParanoid" id="Q5EAJ7"/>
<dbReference type="OMA" id="PKRPNHI"/>
<dbReference type="OrthoDB" id="6125719at2759"/>
<dbReference type="PhylomeDB" id="Q5EAJ7"/>
<dbReference type="Proteomes" id="UP000007110">
    <property type="component" value="Unassembled WGS sequence"/>
</dbReference>
<dbReference type="GO" id="GO:0005737">
    <property type="term" value="C:cytoplasm"/>
    <property type="evidence" value="ECO:0000314"/>
    <property type="project" value="UniProtKB"/>
</dbReference>
<dbReference type="GO" id="GO:0005634">
    <property type="term" value="C:nucleus"/>
    <property type="evidence" value="ECO:0000314"/>
    <property type="project" value="UniProtKB"/>
</dbReference>
<dbReference type="GO" id="GO:1990904">
    <property type="term" value="C:ribonucleoprotein complex"/>
    <property type="evidence" value="ECO:0007669"/>
    <property type="project" value="UniProtKB-KW"/>
</dbReference>
<dbReference type="CDD" id="cd08825">
    <property type="entry name" value="MVP_shoulder"/>
    <property type="match status" value="1"/>
</dbReference>
<dbReference type="FunFam" id="2.30.30.550:FF:000005">
    <property type="entry name" value="Major vault protein"/>
    <property type="match status" value="1"/>
</dbReference>
<dbReference type="FunFam" id="2.30.30.620:FF:000002">
    <property type="entry name" value="Major vault protein"/>
    <property type="match status" value="1"/>
</dbReference>
<dbReference type="FunFam" id="2.30.30.560:FF:000002">
    <property type="entry name" value="Major vault protein-alpha"/>
    <property type="match status" value="1"/>
</dbReference>
<dbReference type="FunFam" id="2.30.30.570:FF:000002">
    <property type="entry name" value="Major vault protein-alpha"/>
    <property type="match status" value="1"/>
</dbReference>
<dbReference type="FunFam" id="2.30.30.550:FF:000001">
    <property type="entry name" value="major vault protein-like"/>
    <property type="match status" value="3"/>
</dbReference>
<dbReference type="FunFam" id="2.30.30.560:FF:000001">
    <property type="entry name" value="major vault protein-like"/>
    <property type="match status" value="1"/>
</dbReference>
<dbReference type="FunFam" id="2.30.30.570:FF:000001">
    <property type="entry name" value="major vault protein-like"/>
    <property type="match status" value="1"/>
</dbReference>
<dbReference type="FunFam" id="3.30.479.30:FF:000010">
    <property type="entry name" value="major vault protein-like"/>
    <property type="match status" value="1"/>
</dbReference>
<dbReference type="Gene3D" id="2.30.30.560">
    <property type="match status" value="2"/>
</dbReference>
<dbReference type="Gene3D" id="2.30.30.570">
    <property type="match status" value="2"/>
</dbReference>
<dbReference type="Gene3D" id="2.30.30.620">
    <property type="match status" value="1"/>
</dbReference>
<dbReference type="Gene3D" id="6.10.250.720">
    <property type="match status" value="1"/>
</dbReference>
<dbReference type="Gene3D" id="6.20.380.10">
    <property type="match status" value="1"/>
</dbReference>
<dbReference type="Gene3D" id="3.30.479.30">
    <property type="entry name" value="Band 7 domain"/>
    <property type="match status" value="1"/>
</dbReference>
<dbReference type="Gene3D" id="2.30.30.550">
    <property type="entry name" value="Major Vault Protein repeat"/>
    <property type="match status" value="4"/>
</dbReference>
<dbReference type="InterPro" id="IPR036013">
    <property type="entry name" value="Band_7/SPFH_dom_sf"/>
</dbReference>
<dbReference type="InterPro" id="IPR039059">
    <property type="entry name" value="MVP"/>
</dbReference>
<dbReference type="InterPro" id="IPR041139">
    <property type="entry name" value="MVP_rep_dom"/>
</dbReference>
<dbReference type="InterPro" id="IPR043023">
    <property type="entry name" value="MVP_rep_sf"/>
</dbReference>
<dbReference type="InterPro" id="IPR021870">
    <property type="entry name" value="MVP_shoulder"/>
</dbReference>
<dbReference type="InterPro" id="IPR041134">
    <property type="entry name" value="Vault_2"/>
</dbReference>
<dbReference type="InterPro" id="IPR043179">
    <property type="entry name" value="Vault_2_sf"/>
</dbReference>
<dbReference type="InterPro" id="IPR040989">
    <property type="entry name" value="Vault_3"/>
</dbReference>
<dbReference type="InterPro" id="IPR041136">
    <property type="entry name" value="Vault_4"/>
</dbReference>
<dbReference type="InterPro" id="IPR002499">
    <property type="entry name" value="Vault_N"/>
</dbReference>
<dbReference type="PANTHER" id="PTHR14165">
    <property type="entry name" value="MAJOR VAULT PROTEIN"/>
    <property type="match status" value="1"/>
</dbReference>
<dbReference type="PANTHER" id="PTHR14165:SF3">
    <property type="entry name" value="MAJOR VAULT PROTEIN"/>
    <property type="match status" value="1"/>
</dbReference>
<dbReference type="Pfam" id="PF11978">
    <property type="entry name" value="MVP_shoulder"/>
    <property type="match status" value="1"/>
</dbReference>
<dbReference type="Pfam" id="PF01505">
    <property type="entry name" value="Vault"/>
    <property type="match status" value="4"/>
</dbReference>
<dbReference type="Pfam" id="PF17794">
    <property type="entry name" value="Vault_2"/>
    <property type="match status" value="2"/>
</dbReference>
<dbReference type="Pfam" id="PF17795">
    <property type="entry name" value="Vault_3"/>
    <property type="match status" value="1"/>
</dbReference>
<dbReference type="Pfam" id="PF17796">
    <property type="entry name" value="Vault_4"/>
    <property type="match status" value="1"/>
</dbReference>
<dbReference type="PROSITE" id="PS50096">
    <property type="entry name" value="IQ"/>
    <property type="match status" value="1"/>
</dbReference>
<dbReference type="PROSITE" id="PS51224">
    <property type="entry name" value="MVP"/>
    <property type="match status" value="8"/>
</dbReference>
<organism>
    <name type="scientific">Strongylocentrotus purpuratus</name>
    <name type="common">Purple sea urchin</name>
    <dbReference type="NCBI Taxonomy" id="7668"/>
    <lineage>
        <taxon>Eukaryota</taxon>
        <taxon>Metazoa</taxon>
        <taxon>Echinodermata</taxon>
        <taxon>Eleutherozoa</taxon>
        <taxon>Echinozoa</taxon>
        <taxon>Echinoidea</taxon>
        <taxon>Euechinoidea</taxon>
        <taxon>Echinacea</taxon>
        <taxon>Camarodonta</taxon>
        <taxon>Echinidea</taxon>
        <taxon>Strongylocentrotidae</taxon>
        <taxon>Strongylocentrotus</taxon>
    </lineage>
</organism>
<feature type="chain" id="PRO_0000394756" description="Major vault protein">
    <location>
        <begin position="1"/>
        <end position="857"/>
    </location>
</feature>
<feature type="repeat" description="MVP 1" evidence="2">
    <location>
        <begin position="18"/>
        <end position="60"/>
    </location>
</feature>
<feature type="repeat" description="MVP 2" evidence="2">
    <location>
        <begin position="62"/>
        <end position="122"/>
    </location>
</feature>
<feature type="repeat" description="MVP 3" evidence="2">
    <location>
        <begin position="123"/>
        <end position="174"/>
    </location>
</feature>
<feature type="repeat" description="MVP 4" evidence="2">
    <location>
        <begin position="175"/>
        <end position="227"/>
    </location>
</feature>
<feature type="repeat" description="MVP 5" evidence="2">
    <location>
        <begin position="228"/>
        <end position="282"/>
    </location>
</feature>
<feature type="repeat" description="MVP 6" evidence="2">
    <location>
        <begin position="284"/>
        <end position="332"/>
    </location>
</feature>
<feature type="repeat" description="MVP 7" evidence="2">
    <location>
        <begin position="333"/>
        <end position="387"/>
    </location>
</feature>
<feature type="repeat" description="MVP 8" evidence="2">
    <location>
        <begin position="388"/>
        <end position="441"/>
    </location>
</feature>
<feature type="domain" description="IQ" evidence="3">
    <location>
        <begin position="665"/>
        <end position="694"/>
    </location>
</feature>
<feature type="region of interest" description="Disordered" evidence="5">
    <location>
        <begin position="434"/>
        <end position="453"/>
    </location>
</feature>
<feature type="compositionally biased region" description="Basic and acidic residues" evidence="5">
    <location>
        <begin position="437"/>
        <end position="453"/>
    </location>
</feature>
<feature type="sequence conflict" description="In Ref. 1; CD333690." evidence="11" ref="1">
    <original>F</original>
    <variation>S</variation>
    <location>
        <position position="51"/>
    </location>
</feature>
<feature type="sequence conflict" description="In Ref. 1; CD333690." evidence="11" ref="1">
    <original>T</original>
    <variation>P</variation>
    <location>
        <position position="58"/>
    </location>
</feature>
<feature type="sequence conflict" description="In Ref. 1; CD305511." evidence="11" ref="1">
    <original>I</original>
    <variation>T</variation>
    <location>
        <position position="59"/>
    </location>
</feature>
<feature type="sequence conflict" description="In Ref. 1; CD333690." evidence="11" ref="1">
    <original>NDT</original>
    <variation>ERY</variation>
    <location>
        <begin position="74"/>
        <end position="76"/>
    </location>
</feature>
<feature type="sequence conflict" description="In Ref. 1; CD333690." evidence="11" ref="1">
    <original>E</original>
    <variation>K</variation>
    <location>
        <position position="109"/>
    </location>
</feature>
<feature type="sequence conflict" description="In Ref. 1; CD333690." evidence="11" ref="1">
    <original>N</original>
    <variation>T</variation>
    <location>
        <position position="124"/>
    </location>
</feature>
<feature type="sequence conflict" description="In Ref. 1; CD333690." evidence="11" ref="1">
    <original>D</original>
    <variation>T</variation>
    <location>
        <position position="137"/>
    </location>
</feature>
<feature type="sequence conflict" description="In Ref. 1; CD305646." evidence="11" ref="1">
    <original>D</original>
    <variation>N</variation>
    <location>
        <position position="296"/>
    </location>
</feature>
<feature type="sequence conflict" description="In Ref. 1; CD295616." evidence="11" ref="1">
    <original>Q</original>
    <variation>H</variation>
    <location>
        <position position="356"/>
    </location>
</feature>
<feature type="sequence conflict" description="In Ref. 1; CD295616." evidence="11" ref="1">
    <original>C</original>
    <variation>R</variation>
    <location>
        <position position="367"/>
    </location>
</feature>
<feature type="sequence conflict" description="In Ref. 1; CD305646." evidence="11" ref="1">
    <original>E</original>
    <variation>K</variation>
    <location>
        <position position="388"/>
    </location>
</feature>
<feature type="sequence conflict" description="In Ref. 1; CD305646." evidence="11" ref="1">
    <original>G</original>
    <variation>E</variation>
    <location>
        <position position="391"/>
    </location>
</feature>
<feature type="sequence conflict" description="In Ref. 1; CD295616." evidence="11" ref="1">
    <original>YK</original>
    <variation>LQ</variation>
    <location>
        <begin position="475"/>
        <end position="476"/>
    </location>
</feature>
<feature type="sequence conflict" description="In Ref. 1; CD295616." evidence="11" ref="1">
    <original>VML</original>
    <variation>CHA</variation>
    <location>
        <begin position="489"/>
        <end position="491"/>
    </location>
</feature>
<keyword id="KW-0963">Cytoplasm</keyword>
<keyword id="KW-0539">Nucleus</keyword>
<keyword id="KW-1185">Reference proteome</keyword>
<keyword id="KW-0677">Repeat</keyword>
<keyword id="KW-0687">Ribonucleoprotein</keyword>
<gene>
    <name evidence="12" type="primary">MVP</name>
</gene>
<sequence>MASKRGSNQDESIFRIPPYYYIHVLDHNDNVTKVVVGPKTYIRQDHERVIFGPEKMITIPPRHYCIIENPVVRNDTDQVVYDNLGQVKLFHADQEIRLAREPFPLYPGEVLKQAVTALKVVQANAALRLRAILDFEDGTQKRVAGDEWLFEGPGTYIPRKEVVVDETIRATIIRPNQAIKLRARKETNDREGTARVTGEEWQVKKVGAYLPGAYEEVVDTVNAYVLTEKNALHLRATRTFVDMKGKTRKNGEEWLINMADTDAHIPDVYEEVVGVVDINTLTNRQYCVIVDPVGPDGKPQLGQKKLVKGEVSFFLQPGETLEQGIQSVFILGEDEGLILRAQESFKDANAAGAVRQPGDRWMIRGPCEYVPTVELEVVTRRKAIPLDENEGVYIRDTKTGKVRAVTGETYMLSQDEELWAKELSPAVEELLQSAKDPVAERSDRRGDRAAPRAREKTRVISFRVPHNAAVQIYDYKEKKARVVFGPELVMLGPDEQFTQLSLSGGKPKRPNVIKALCLLLGPDFCTDIITIETADHARLQLQLSYNWHFDVPDKTDVAASAKLFSVPDFIGDACKAIASRIRGAVAGVQFDDFHKNSAKIIRASVFGFDEKNKVRERFLFPQNSLVITSIDIQSVEPVDQRTRDALQKSVQLAIEITTNSQEATARHEAERLEQEARGRLERQKIMDEAEAEKSRKELLELQANSAAVESTGQAKAEAQSRAEAARIEGEAAVDQARLKAEAAKIESESELQRLTNAREAETKYVREQNALEVNKTKQMSDIETERFRNMVQSIGADTIKAMAMAGPEMQVKLLSSLGLKSTLITDGSTPINLFNTAQGLLGGFSAKRGIEHVEEED</sequence>
<protein>
    <recommendedName>
        <fullName evidence="12">Major vault protein</fullName>
        <shortName evidence="10">MVP</shortName>
    </recommendedName>
</protein>
<proteinExistence type="evidence at protein level"/>
<comment type="function">
    <text evidence="1">Required for normal vault structure. Vaults are multi-subunit structures that may act as scaffolds for proteins involved in signal transduction. Vaults may also play a role in nucleo-cytoplasmic transport (By similarity).</text>
</comment>
<comment type="subunit">
    <text evidence="1 8">The vault ribonucleoprotein particle is a huge (400 A x 670 A) cage structure of 12.9 MDa. It consists of a dimer of half-vaults, with each half-vault comprising 39 identical major vault protein (MVP) chains, PARP4 and one or more vault RNAs (vRNAs).</text>
</comment>
<comment type="subcellular location">
    <subcellularLocation>
        <location evidence="4 8 9">Cytoplasm</location>
    </subcellularLocation>
    <subcellularLocation>
        <location evidence="8 9">Nucleus</location>
    </subcellularLocation>
</comment>
<comment type="tissue specificity">
    <text evidence="9">Expressed in embryos, tube feet and coelomocytes (at protein level). Not expressed in sperm cells (at protein level).</text>
</comment>
<comment type="developmental stage">
    <text evidence="8 9">Highly and constitutively expressed throughout development. However, the ratio of soluble to insoluble protein changes during embryogenesis. Additionally, the distribution changes from a largely cytoplasmic distribution in the cleavage stage embryo to a predominantly nuclear and/or perinuclear location at blastula and gastrula stages.</text>
</comment>
<comment type="sequence caution" evidence="11">
    <conflict type="frameshift">
        <sequence resource="EMBL" id="CD295616"/>
    </conflict>
</comment>
<comment type="sequence caution" evidence="11">
    <conflict type="frameshift">
        <sequence resource="EMBL" id="CD295832"/>
    </conflict>
</comment>
<comment type="sequence caution" evidence="11">
    <conflict type="frameshift">
        <sequence resource="EMBL" id="CD304000"/>
    </conflict>
</comment>
<comment type="sequence caution" evidence="11">
    <conflict type="frameshift">
        <sequence resource="EMBL" id="CD305511"/>
    </conflict>
</comment>
<comment type="sequence caution" evidence="11">
    <conflict type="frameshift">
        <sequence resource="EMBL" id="CD333690"/>
    </conflict>
</comment>
<name>MVP_STRPU</name>